<comment type="function">
    <text evidence="1">Negatively regulates transcription of bacterial ribonucleotide reductase nrd genes and operons by binding to NrdR-boxes.</text>
</comment>
<comment type="cofactor">
    <cofactor evidence="1">
        <name>Zn(2+)</name>
        <dbReference type="ChEBI" id="CHEBI:29105"/>
    </cofactor>
    <text evidence="1">Binds 1 zinc ion.</text>
</comment>
<comment type="similarity">
    <text evidence="1">Belongs to the NrdR family.</text>
</comment>
<keyword id="KW-0067">ATP-binding</keyword>
<keyword id="KW-0238">DNA-binding</keyword>
<keyword id="KW-0479">Metal-binding</keyword>
<keyword id="KW-0547">Nucleotide-binding</keyword>
<keyword id="KW-1185">Reference proteome</keyword>
<keyword id="KW-0678">Repressor</keyword>
<keyword id="KW-0804">Transcription</keyword>
<keyword id="KW-0805">Transcription regulation</keyword>
<keyword id="KW-0862">Zinc</keyword>
<keyword id="KW-0863">Zinc-finger</keyword>
<name>NRDR_ANADE</name>
<proteinExistence type="inferred from homology"/>
<reference key="1">
    <citation type="submission" date="2006-01" db="EMBL/GenBank/DDBJ databases">
        <title>Complete sequence of Anaeromyxobacter dehalogenans 2CP-C.</title>
        <authorList>
            <person name="Copeland A."/>
            <person name="Lucas S."/>
            <person name="Lapidus A."/>
            <person name="Barry K."/>
            <person name="Detter J.C."/>
            <person name="Glavina T."/>
            <person name="Hammon N."/>
            <person name="Israni S."/>
            <person name="Pitluck S."/>
            <person name="Brettin T."/>
            <person name="Bruce D."/>
            <person name="Han C."/>
            <person name="Tapia R."/>
            <person name="Gilna P."/>
            <person name="Kiss H."/>
            <person name="Schmutz J."/>
            <person name="Larimer F."/>
            <person name="Land M."/>
            <person name="Kyrpides N."/>
            <person name="Anderson I."/>
            <person name="Sanford R.A."/>
            <person name="Ritalahti K.M."/>
            <person name="Thomas H.S."/>
            <person name="Kirby J.R."/>
            <person name="Zhulin I.B."/>
            <person name="Loeffler F.E."/>
            <person name="Richardson P."/>
        </authorList>
    </citation>
    <scope>NUCLEOTIDE SEQUENCE [LARGE SCALE GENOMIC DNA]</scope>
    <source>
        <strain>2CP-C</strain>
    </source>
</reference>
<feature type="chain" id="PRO_0000264159" description="Transcriptional repressor NrdR">
    <location>
        <begin position="1"/>
        <end position="156"/>
    </location>
</feature>
<feature type="domain" description="ATP-cone" evidence="1">
    <location>
        <begin position="49"/>
        <end position="139"/>
    </location>
</feature>
<feature type="zinc finger region" evidence="1">
    <location>
        <begin position="3"/>
        <end position="34"/>
    </location>
</feature>
<organism>
    <name type="scientific">Anaeromyxobacter dehalogenans (strain 2CP-C)</name>
    <dbReference type="NCBI Taxonomy" id="290397"/>
    <lineage>
        <taxon>Bacteria</taxon>
        <taxon>Pseudomonadati</taxon>
        <taxon>Myxococcota</taxon>
        <taxon>Myxococcia</taxon>
        <taxon>Myxococcales</taxon>
        <taxon>Cystobacterineae</taxon>
        <taxon>Anaeromyxobacteraceae</taxon>
        <taxon>Anaeromyxobacter</taxon>
    </lineage>
</organism>
<protein>
    <recommendedName>
        <fullName evidence="1">Transcriptional repressor NrdR</fullName>
    </recommendedName>
</protein>
<evidence type="ECO:0000255" key="1">
    <source>
        <dbReference type="HAMAP-Rule" id="MF_00440"/>
    </source>
</evidence>
<sequence>MRCPYCGHLEDRVVDSRETQDGQATRRRRACLSCERRFTTYERIEDVLPQVVKKDGRREAFDRAKIVEGVATACQKRPVSAEQVEALVSAVERQVQELGEREIRTAVIGEAVMQRLRTLDEVAYVRFASVYRAFRDVGEFMTELAGLARKDGGEER</sequence>
<accession>Q2ILI2</accession>
<dbReference type="EMBL" id="CP000251">
    <property type="protein sequence ID" value="ABC82513.1"/>
    <property type="molecule type" value="Genomic_DNA"/>
</dbReference>
<dbReference type="RefSeq" id="WP_011421795.1">
    <property type="nucleotide sequence ID" value="NC_007760.1"/>
</dbReference>
<dbReference type="SMR" id="Q2ILI2"/>
<dbReference type="STRING" id="290397.Adeh_2743"/>
<dbReference type="KEGG" id="ade:Adeh_2743"/>
<dbReference type="eggNOG" id="COG1327">
    <property type="taxonomic scope" value="Bacteria"/>
</dbReference>
<dbReference type="HOGENOM" id="CLU_108412_0_0_7"/>
<dbReference type="OrthoDB" id="9807461at2"/>
<dbReference type="Proteomes" id="UP000001935">
    <property type="component" value="Chromosome"/>
</dbReference>
<dbReference type="GO" id="GO:0005524">
    <property type="term" value="F:ATP binding"/>
    <property type="evidence" value="ECO:0007669"/>
    <property type="project" value="UniProtKB-KW"/>
</dbReference>
<dbReference type="GO" id="GO:0003677">
    <property type="term" value="F:DNA binding"/>
    <property type="evidence" value="ECO:0007669"/>
    <property type="project" value="UniProtKB-KW"/>
</dbReference>
<dbReference type="GO" id="GO:0008270">
    <property type="term" value="F:zinc ion binding"/>
    <property type="evidence" value="ECO:0007669"/>
    <property type="project" value="UniProtKB-UniRule"/>
</dbReference>
<dbReference type="GO" id="GO:0045892">
    <property type="term" value="P:negative regulation of DNA-templated transcription"/>
    <property type="evidence" value="ECO:0007669"/>
    <property type="project" value="UniProtKB-UniRule"/>
</dbReference>
<dbReference type="HAMAP" id="MF_00440">
    <property type="entry name" value="NrdR"/>
    <property type="match status" value="1"/>
</dbReference>
<dbReference type="InterPro" id="IPR005144">
    <property type="entry name" value="ATP-cone_dom"/>
</dbReference>
<dbReference type="InterPro" id="IPR055173">
    <property type="entry name" value="NrdR-like_N"/>
</dbReference>
<dbReference type="InterPro" id="IPR003796">
    <property type="entry name" value="RNR_NrdR-like"/>
</dbReference>
<dbReference type="NCBIfam" id="TIGR00244">
    <property type="entry name" value="transcriptional regulator NrdR"/>
    <property type="match status" value="1"/>
</dbReference>
<dbReference type="PANTHER" id="PTHR30455">
    <property type="entry name" value="TRANSCRIPTIONAL REPRESSOR NRDR"/>
    <property type="match status" value="1"/>
</dbReference>
<dbReference type="PANTHER" id="PTHR30455:SF2">
    <property type="entry name" value="TRANSCRIPTIONAL REPRESSOR NRDR"/>
    <property type="match status" value="1"/>
</dbReference>
<dbReference type="Pfam" id="PF03477">
    <property type="entry name" value="ATP-cone"/>
    <property type="match status" value="1"/>
</dbReference>
<dbReference type="Pfam" id="PF22811">
    <property type="entry name" value="Zn_ribbon_NrdR"/>
    <property type="match status" value="1"/>
</dbReference>
<dbReference type="PROSITE" id="PS51161">
    <property type="entry name" value="ATP_CONE"/>
    <property type="match status" value="1"/>
</dbReference>
<gene>
    <name evidence="1" type="primary">nrdR</name>
    <name type="ordered locus">Adeh_2743</name>
</gene>